<proteinExistence type="inferred from homology"/>
<evidence type="ECO:0000255" key="1">
    <source>
        <dbReference type="HAMAP-Rule" id="MF_00388"/>
    </source>
</evidence>
<comment type="function">
    <text evidence="1">Catalyzes the hydrolysis of UDP-3-O-myristoyl-N-acetylglucosamine to form UDP-3-O-myristoylglucosamine and acetate, the committed step in lipid A biosynthesis.</text>
</comment>
<comment type="catalytic activity">
    <reaction evidence="1">
        <text>a UDP-3-O-[(3R)-3-hydroxyacyl]-N-acetyl-alpha-D-glucosamine + H2O = a UDP-3-O-[(3R)-3-hydroxyacyl]-alpha-D-glucosamine + acetate</text>
        <dbReference type="Rhea" id="RHEA:67816"/>
        <dbReference type="ChEBI" id="CHEBI:15377"/>
        <dbReference type="ChEBI" id="CHEBI:30089"/>
        <dbReference type="ChEBI" id="CHEBI:137740"/>
        <dbReference type="ChEBI" id="CHEBI:173225"/>
        <dbReference type="EC" id="3.5.1.108"/>
    </reaction>
</comment>
<comment type="cofactor">
    <cofactor evidence="1">
        <name>Zn(2+)</name>
        <dbReference type="ChEBI" id="CHEBI:29105"/>
    </cofactor>
</comment>
<comment type="pathway">
    <text evidence="1">Glycolipid biosynthesis; lipid IV(A) biosynthesis; lipid IV(A) from (3R)-3-hydroxytetradecanoyl-[acyl-carrier-protein] and UDP-N-acetyl-alpha-D-glucosamine: step 2/6.</text>
</comment>
<comment type="similarity">
    <text evidence="1">Belongs to the LpxC family.</text>
</comment>
<accession>Q604W4</accession>
<feature type="chain" id="PRO_0000253678" description="UDP-3-O-acyl-N-acetylglucosamine deacetylase">
    <location>
        <begin position="1"/>
        <end position="304"/>
    </location>
</feature>
<feature type="active site" description="Proton donor" evidence="1">
    <location>
        <position position="264"/>
    </location>
</feature>
<feature type="binding site" evidence="1">
    <location>
        <position position="78"/>
    </location>
    <ligand>
        <name>Zn(2+)</name>
        <dbReference type="ChEBI" id="CHEBI:29105"/>
    </ligand>
</feature>
<feature type="binding site" evidence="1">
    <location>
        <position position="237"/>
    </location>
    <ligand>
        <name>Zn(2+)</name>
        <dbReference type="ChEBI" id="CHEBI:29105"/>
    </ligand>
</feature>
<feature type="binding site" evidence="1">
    <location>
        <position position="241"/>
    </location>
    <ligand>
        <name>Zn(2+)</name>
        <dbReference type="ChEBI" id="CHEBI:29105"/>
    </ligand>
</feature>
<gene>
    <name evidence="1" type="primary">lpxC</name>
    <name type="ordered locus">MCA2422</name>
</gene>
<keyword id="KW-0378">Hydrolase</keyword>
<keyword id="KW-0441">Lipid A biosynthesis</keyword>
<keyword id="KW-0444">Lipid biosynthesis</keyword>
<keyword id="KW-0443">Lipid metabolism</keyword>
<keyword id="KW-0479">Metal-binding</keyword>
<keyword id="KW-1185">Reference proteome</keyword>
<keyword id="KW-0862">Zinc</keyword>
<organism>
    <name type="scientific">Methylococcus capsulatus (strain ATCC 33009 / NCIMB 11132 / Bath)</name>
    <dbReference type="NCBI Taxonomy" id="243233"/>
    <lineage>
        <taxon>Bacteria</taxon>
        <taxon>Pseudomonadati</taxon>
        <taxon>Pseudomonadota</taxon>
        <taxon>Gammaproteobacteria</taxon>
        <taxon>Methylococcales</taxon>
        <taxon>Methylococcaceae</taxon>
        <taxon>Methylococcus</taxon>
    </lineage>
</organism>
<reference key="1">
    <citation type="journal article" date="2004" name="PLoS Biol.">
        <title>Genomic insights into methanotrophy: the complete genome sequence of Methylococcus capsulatus (Bath).</title>
        <authorList>
            <person name="Ward N.L."/>
            <person name="Larsen O."/>
            <person name="Sakwa J."/>
            <person name="Bruseth L."/>
            <person name="Khouri H.M."/>
            <person name="Durkin A.S."/>
            <person name="Dimitrov G."/>
            <person name="Jiang L."/>
            <person name="Scanlan D."/>
            <person name="Kang K.H."/>
            <person name="Lewis M.R."/>
            <person name="Nelson K.E."/>
            <person name="Methe B.A."/>
            <person name="Wu M."/>
            <person name="Heidelberg J.F."/>
            <person name="Paulsen I.T."/>
            <person name="Fouts D.E."/>
            <person name="Ravel J."/>
            <person name="Tettelin H."/>
            <person name="Ren Q."/>
            <person name="Read T.D."/>
            <person name="DeBoy R.T."/>
            <person name="Seshadri R."/>
            <person name="Salzberg S.L."/>
            <person name="Jensen H.B."/>
            <person name="Birkeland N.K."/>
            <person name="Nelson W.C."/>
            <person name="Dodson R.J."/>
            <person name="Grindhaug S.H."/>
            <person name="Holt I.E."/>
            <person name="Eidhammer I."/>
            <person name="Jonasen I."/>
            <person name="Vanaken S."/>
            <person name="Utterback T.R."/>
            <person name="Feldblyum T.V."/>
            <person name="Fraser C.M."/>
            <person name="Lillehaug J.R."/>
            <person name="Eisen J.A."/>
        </authorList>
    </citation>
    <scope>NUCLEOTIDE SEQUENCE [LARGE SCALE GENOMIC DNA]</scope>
    <source>
        <strain>ATCC 33009 / NCIMB 11132 / Bath</strain>
    </source>
</reference>
<dbReference type="EC" id="3.5.1.108" evidence="1"/>
<dbReference type="EMBL" id="AE017282">
    <property type="protein sequence ID" value="AAU91495.1"/>
    <property type="molecule type" value="Genomic_DNA"/>
</dbReference>
<dbReference type="RefSeq" id="WP_010961647.1">
    <property type="nucleotide sequence ID" value="NC_002977.6"/>
</dbReference>
<dbReference type="SMR" id="Q604W4"/>
<dbReference type="STRING" id="243233.MCA2422"/>
<dbReference type="GeneID" id="88224623"/>
<dbReference type="KEGG" id="mca:MCA2422"/>
<dbReference type="eggNOG" id="COG0774">
    <property type="taxonomic scope" value="Bacteria"/>
</dbReference>
<dbReference type="HOGENOM" id="CLU_046528_1_0_6"/>
<dbReference type="UniPathway" id="UPA00359">
    <property type="reaction ID" value="UER00478"/>
</dbReference>
<dbReference type="Proteomes" id="UP000006821">
    <property type="component" value="Chromosome"/>
</dbReference>
<dbReference type="GO" id="GO:0016020">
    <property type="term" value="C:membrane"/>
    <property type="evidence" value="ECO:0007669"/>
    <property type="project" value="GOC"/>
</dbReference>
<dbReference type="GO" id="GO:0046872">
    <property type="term" value="F:metal ion binding"/>
    <property type="evidence" value="ECO:0007669"/>
    <property type="project" value="UniProtKB-KW"/>
</dbReference>
<dbReference type="GO" id="GO:0103117">
    <property type="term" value="F:UDP-3-O-acyl-N-acetylglucosamine deacetylase activity"/>
    <property type="evidence" value="ECO:0007669"/>
    <property type="project" value="UniProtKB-UniRule"/>
</dbReference>
<dbReference type="GO" id="GO:0009245">
    <property type="term" value="P:lipid A biosynthetic process"/>
    <property type="evidence" value="ECO:0007669"/>
    <property type="project" value="UniProtKB-UniRule"/>
</dbReference>
<dbReference type="Gene3D" id="3.30.230.20">
    <property type="entry name" value="lpxc deacetylase, domain 1"/>
    <property type="match status" value="1"/>
</dbReference>
<dbReference type="Gene3D" id="3.30.1700.10">
    <property type="entry name" value="lpxc deacetylase, domain 2"/>
    <property type="match status" value="1"/>
</dbReference>
<dbReference type="HAMAP" id="MF_00388">
    <property type="entry name" value="LpxC"/>
    <property type="match status" value="1"/>
</dbReference>
<dbReference type="InterPro" id="IPR020568">
    <property type="entry name" value="Ribosomal_Su5_D2-typ_SF"/>
</dbReference>
<dbReference type="InterPro" id="IPR004463">
    <property type="entry name" value="UDP-acyl_GlcNac_deAcase"/>
</dbReference>
<dbReference type="InterPro" id="IPR011334">
    <property type="entry name" value="UDP-acyl_GlcNac_deAcase_C"/>
</dbReference>
<dbReference type="InterPro" id="IPR015870">
    <property type="entry name" value="UDP-acyl_N-AcGlcN_deAcase_N"/>
</dbReference>
<dbReference type="NCBIfam" id="TIGR00325">
    <property type="entry name" value="lpxC"/>
    <property type="match status" value="1"/>
</dbReference>
<dbReference type="PANTHER" id="PTHR33694">
    <property type="entry name" value="UDP-3-O-ACYL-N-ACETYLGLUCOSAMINE DEACETYLASE 1, MITOCHONDRIAL-RELATED"/>
    <property type="match status" value="1"/>
</dbReference>
<dbReference type="PANTHER" id="PTHR33694:SF1">
    <property type="entry name" value="UDP-3-O-ACYL-N-ACETYLGLUCOSAMINE DEACETYLASE 1, MITOCHONDRIAL-RELATED"/>
    <property type="match status" value="1"/>
</dbReference>
<dbReference type="Pfam" id="PF03331">
    <property type="entry name" value="LpxC"/>
    <property type="match status" value="1"/>
</dbReference>
<dbReference type="SUPFAM" id="SSF54211">
    <property type="entry name" value="Ribosomal protein S5 domain 2-like"/>
    <property type="match status" value="2"/>
</dbReference>
<name>LPXC_METCA</name>
<protein>
    <recommendedName>
        <fullName evidence="1">UDP-3-O-acyl-N-acetylglucosamine deacetylase</fullName>
        <shortName evidence="1">UDP-3-O-acyl-GlcNAc deacetylase</shortName>
        <ecNumber evidence="1">3.5.1.108</ecNumber>
    </recommendedName>
    <alternativeName>
        <fullName evidence="1">UDP-3-O-[R-3-hydroxymyristoyl]-N-acetylglucosamine deacetylase</fullName>
    </alternativeName>
</protein>
<sequence>MIKQRTLKNVIRATGVGLHTGEKVYLTLRPAAPNSGIKFRRVDLAEPVVIDARPDNVGDTTLSTTLVKGDVRISTVEHLLSAFAGLGIDNAYVDVSAPEVPIMDGSAGPFVFLIQSAGVQEQEAPKQFIRIKRPLQVEDGDKWARFEPHDGFKVTFTIDFDHPVFDKNSQTASIEFSSTSFVKEIARARTFGFMRDIEMLRKNRLALGGSMDNAIVVDKFRVLNEDGLRSGDEFVKHKILDAIGDLYLLGHSLIGSFTGYKSGHGLNNHLLCELLKARDAWEMVSFEDEGYAPISYMRTAPAGR</sequence>